<comment type="function">
    <molecule>Alpha-1-microglobulin</molecule>
    <text evidence="2 3">Antioxidant and tissue repair protein with reductase, heme-binding and radical-scavenging activities. Removes and protects against harmful oxidants and repairs macromolecules in intravascular and extravascular spaces and in intracellular compartments. Intravascularly, plays a regulatory role in red cell homeostasis by preventing heme- and reactive oxygen species-induced cell damage. Binds and degrades free heme to protect fetal and adult red blood cells from hemolysis. Reduces extracellular methemoglobin, a Fe3+ (ferric) form of hemoglobin that cannot bind oxygen, back to the Fe2+ (ferrous) form deoxyhemoglobin, which has oxygen-carrying potential. Upon acute inflammation, inhibits oxidation of low-density lipoprotein particles by MPO and limits vascular damage. Extravascularly, protects from oxidation products formed on extracellular matrix structures and cell membranes. Catalyzes the reduction of carbonyl groups on oxidized collagen fibers and preserves cellular and extracellular matrix ultrastructures. Importantly, counteracts the oxidative damage at blood-placenta interface, preventing leakage of free fetal hemoglobin into the maternal circulation. Intracellularly, has a role in maintaining mitochondrial redox homeostasis. Bound to complex I of the respiratory chain of mitochondria, may scavenge free radicals and preserve mitochondrial ATP synthesis. Protects renal tubule epithelial cells from heme-induced oxidative damage to mitochondria. Reduces cytochrome c from Fe3+ (ferric) to the Fe2+ (ferrous) state through formation of superoxide anion radicals in the presence of ascorbate or NADH/NADPH electron donor cofactors, ascorbate being the preferred cofactor (By similarity). Has a chaperone role in facilitating the correct folding of bikunin in the endoplasmic reticulum compartment (By similarity).</text>
</comment>
<comment type="function">
    <molecule>Inter-alpha-trypsin inhibitor light chain</molecule>
    <text evidence="2 3">Kunitz-type serine protease inhibitor and structural component of extracellular matrix with a role in extracellular space remodeling and cell adhesion. Among others, has antiprotease activity toward kallikrein, a protease involved in airway inflammation; inhibits GZMK/granzyme, a granule-stored serine protease involved in NK and T cell cytotoxic responses; and inhibits PLG/plasmin, a protease required for activation of matrix metalloproteinases. As part of I-alpha-I complex, provides for the heavy chains to be transferred from I-alpha-I complex to hyaluronan in the presence of TNFAIP6, in a dynamic process that releases free bikunin and remodels extracellular matrix proteoglycan structures. Free bikunin, but not its heavy chain-bound form, acts as a potent protease inhibitor in airway secretions (By similarity). Part of hyaluronan-rich extracellular matrix that surrounds oocyte during cumulus oophorus expansion, an indispensable process for proper ovulation (By similarity). Also inhibits calcium oxalate crystallization (By similarity).</text>
</comment>
<comment type="function">
    <molecule>Trypstatin</molecule>
    <text evidence="6">Kunitz-type serine protease inhibitor. Has high catalytic efficiency for F10/blood coagulation factor Xa and may act as an anticoagulant by inhibiting prothrombin activation. Inhibits trypsin and mast cell CMA1/chymase and tryptase proteases.</text>
</comment>
<comment type="subunit">
    <molecule>Alpha-1-microglobulin</molecule>
    <text evidence="2 7">Monomer. Homodimer. In plasma, it occurs as a monomer or dimer and in covalently-linked complexes with immunoglobulin A (IgA), ALB/albumin and F2/prothrombin. Chromophore-bound alpha-1-microglobulin interacts with the constant region of immunoglobulin A. Chromophore-bound alpha-1-microglobulin interacts with ALB with molar ratio 2:1 and 1:1; this interaction does not prevent fatty acid binding to ALB. Interacts with F2/prothrombin (via N-terminus) with molar ratio 2:1 and 1:1; this interaction does not prevent the activation of prothrombin to thrombin. Interacts with NDUFAB1, a subunit of mitochondrial complex I (By similarity). Interacts with FN1 (PubMed:7519849).</text>
</comment>
<comment type="subunit">
    <molecule>Inter-alpha-trypsin inhibitor light chain</molecule>
    <text evidence="2">I-alpha-I plasma protease inhibitors are assembled from one or two heavy chains (HC) and one light chain, bikunin. Inter-alpha-inhibitor (I-alpha-I) is composed of ITIH1/HC1, ITIH2/HC2 and bikunin, and pre-alpha-inhibitor (P-alpha-I) of ITIH3/HC3 and bikunin. Interacts with TNFAIP6 (via Link domain).</text>
</comment>
<comment type="subunit">
    <molecule>Trypstatin</molecule>
    <text evidence="6">Monomer. Also occurs as a complex with tryptase in mast cells.</text>
</comment>
<comment type="subcellular location">
    <molecule>Alpha-1-microglobulin</molecule>
    <subcellularLocation>
        <location evidence="2">Secreted</location>
    </subcellularLocation>
    <subcellularLocation>
        <location evidence="2">Endoplasmic reticulum</location>
    </subcellularLocation>
    <subcellularLocation>
        <location evidence="2">Cytoplasm</location>
        <location evidence="2">Cytosol</location>
    </subcellularLocation>
    <subcellularLocation>
        <location evidence="2">Cell membrane</location>
        <topology evidence="2">Peripheral membrane protein</topology>
    </subcellularLocation>
    <subcellularLocation>
        <location evidence="2">Nucleus membrane</location>
        <topology evidence="2">Peripheral membrane protein</topology>
    </subcellularLocation>
    <subcellularLocation>
        <location evidence="2">Mitochondrion inner membrane</location>
        <topology evidence="2">Peripheral membrane protein</topology>
    </subcellularLocation>
    <subcellularLocation>
        <location evidence="2">Secreted</location>
        <location evidence="2">Extracellular space</location>
        <location evidence="2">Extracellular matrix</location>
    </subcellularLocation>
    <text evidence="2">The cellular uptake occurs via a non-endocytotic pathway and allows for localization to various membrane structures. A specific binding to plasma membrane suggests the presence of a cell receptor, yet to be identified. Directly binds collagen fibers type I.</text>
</comment>
<comment type="subcellular location">
    <molecule>Inter-alpha-trypsin inhibitor light chain</molecule>
    <subcellularLocation>
        <location evidence="2">Secreted</location>
    </subcellularLocation>
</comment>
<comment type="tissue specificity">
    <text>Expressed by the liver and secreted in plasma.</text>
</comment>
<comment type="domain">
    <molecule>Inter-alpha-trypsin inhibitor light chain</molecule>
    <text evidence="2">The Kunitz domains 1 and 2 serve as protease inhibitor domains.</text>
</comment>
<comment type="PTM">
    <text evidence="2">The precursor is proteolytically processed into separately functioning proteins.</text>
</comment>
<comment type="PTM">
    <molecule>Alpha-1-microglobulin</molecule>
    <text evidence="2">3-hydroxykynurenine, an oxidized tryptophan metabolite that is common in biological fluids, reacts with Cys-53, Lys-111, Lys-137, and Lys-149 to form heterogeneous polycyclic chromophores including hydroxanthommatin. The reaction by alpha-1-microglobulin is autocatalytic; the human protein forms chromophore even when expressed in insect and bacterial cells. The chromophore can react with accessible cysteines forming non-reducible thioether cross-links with other molecules of alpha-1-microglobulin or with other proteins such as Ig alpha-1 chain C region 'Cys-352'.</text>
</comment>
<comment type="PTM">
    <molecule>Inter-alpha-trypsin inhibitor light chain</molecule>
    <text evidence="2">Heavy chains are interlinked with bikunin via a chondroitin 4-sulfate bridge to the C-terminal aspartate.</text>
</comment>
<comment type="PTM">
    <molecule>Inter-alpha-trypsin inhibitor light chain</molecule>
    <text evidence="2">Proteolytically cleaved by PRSS3 at Kunitz domain 2.</text>
</comment>
<comment type="similarity">
    <text evidence="9">In the N-terminal section; belongs to the calycin superfamily. Lipocalin family.</text>
</comment>
<feature type="signal peptide" evidence="1">
    <location>
        <begin position="1"/>
        <end position="19"/>
    </location>
</feature>
<feature type="chain" id="PRO_0000017897" description="Alpha-1-microglobulin">
    <location>
        <begin position="20"/>
        <end position="202"/>
    </location>
</feature>
<feature type="chain" id="PRO_0000017898" description="Inter-alpha-trypsin inhibitor light chain">
    <location>
        <begin position="205"/>
        <end position="349"/>
    </location>
</feature>
<feature type="chain" id="PRO_0000017899" description="Trypstatin">
    <location>
        <begin position="283"/>
        <end position="343"/>
    </location>
</feature>
<feature type="domain" description="BPTI/Kunitz inhibitor 1" evidence="5">
    <location>
        <begin position="230"/>
        <end position="280"/>
    </location>
</feature>
<feature type="domain" description="BPTI/Kunitz inhibitor 2" evidence="5">
    <location>
        <begin position="286"/>
        <end position="336"/>
    </location>
</feature>
<feature type="binding site" description="covalent" evidence="2">
    <location>
        <position position="52"/>
    </location>
    <ligand>
        <name>3-hydroxy-L-kynurenine</name>
        <dbReference type="ChEBI" id="CHEBI:58125"/>
        <note>multimeric 3-hydroxykynurenine chromophore</note>
    </ligand>
</feature>
<feature type="binding site" description="covalent" evidence="2">
    <location>
        <position position="110"/>
    </location>
    <ligand>
        <name>3-hydroxy-L-kynurenine</name>
        <dbReference type="ChEBI" id="CHEBI:58125"/>
        <note>multimeric 3-hydroxykynurenine chromophore</note>
    </ligand>
</feature>
<feature type="binding site" description="covalent" evidence="2">
    <location>
        <position position="136"/>
    </location>
    <ligand>
        <name>3-hydroxy-L-kynurenine</name>
        <dbReference type="ChEBI" id="CHEBI:58125"/>
        <note>multimeric 3-hydroxykynurenine chromophore</note>
    </ligand>
</feature>
<feature type="binding site" description="covalent" evidence="2">
    <location>
        <position position="148"/>
    </location>
    <ligand>
        <name>3-hydroxy-L-kynurenine</name>
        <dbReference type="ChEBI" id="CHEBI:58125"/>
        <note>multimeric 3-hydroxykynurenine chromophore</note>
    </ligand>
</feature>
<feature type="site" description="Inhibitory (P1) (chymotrypsin, elastase)" evidence="1">
    <location>
        <begin position="240"/>
        <end position="241"/>
    </location>
</feature>
<feature type="site" description="Inhibitory (P1) (trypsin)" evidence="1">
    <location>
        <begin position="296"/>
        <end position="297"/>
    </location>
</feature>
<feature type="glycosylation site" description="N-linked (GlcNAc...) asparagine" evidence="4">
    <location>
        <position position="114"/>
    </location>
</feature>
<feature type="glycosylation site" description="O-linked (Xyl...) (chondroitin sulfate) serine" evidence="2">
    <location>
        <position position="214"/>
    </location>
</feature>
<feature type="glycosylation site" description="N-linked (GlcNAc...) asparagine" evidence="4">
    <location>
        <position position="233"/>
    </location>
</feature>
<feature type="disulfide bond" evidence="5">
    <location>
        <begin position="90"/>
        <end position="187"/>
    </location>
</feature>
<feature type="disulfide bond" evidence="5">
    <location>
        <begin position="230"/>
        <end position="280"/>
    </location>
</feature>
<feature type="disulfide bond" evidence="5">
    <location>
        <begin position="239"/>
        <end position="263"/>
    </location>
</feature>
<feature type="disulfide bond" evidence="5">
    <location>
        <begin position="255"/>
        <end position="276"/>
    </location>
</feature>
<feature type="disulfide bond" evidence="5">
    <location>
        <begin position="286"/>
        <end position="336"/>
    </location>
</feature>
<feature type="disulfide bond" evidence="5">
    <location>
        <begin position="295"/>
        <end position="319"/>
    </location>
</feature>
<feature type="disulfide bond" evidence="5">
    <location>
        <begin position="311"/>
        <end position="332"/>
    </location>
</feature>
<feature type="sequence conflict" description="In Ref. 3; AAA41596." evidence="9" ref="3">
    <original>G</original>
    <variation>A</variation>
    <location>
        <position position="142"/>
    </location>
</feature>
<feature type="sequence conflict" description="In Ref. 4; AA sequence." evidence="9" ref="4">
    <original>W</original>
    <variation>L</variation>
    <location>
        <position position="302"/>
    </location>
</feature>
<feature type="sequence conflict" description="In Ref. 4; AA sequence." evidence="9" ref="4">
    <original>G</original>
    <variation>N</variation>
    <location>
        <position position="323"/>
    </location>
</feature>
<feature type="sequence conflict" description="In Ref. 4; AA sequence." evidence="9" ref="4">
    <original>KE</original>
    <variation>PK</variation>
    <location>
        <begin position="330"/>
        <end position="331"/>
    </location>
</feature>
<feature type="sequence conflict" description="In Ref. 4; AA sequence." evidence="9" ref="4">
    <original>E</original>
    <variation>W</variation>
    <location>
        <position position="334"/>
    </location>
</feature>
<reference key="1">
    <citation type="journal article" date="1992" name="Biochim. Biophys. Acta">
        <title>Rat alpha 1-microglobulin: co-expression in liver with the light chain of inter-alpha-trypsin inhibitor.</title>
        <authorList>
            <person name="Lindqvist A."/>
            <person name="Bratt T."/>
            <person name="Altieri M."/>
            <person name="Kastern W."/>
            <person name="Aakerstroem B."/>
        </authorList>
    </citation>
    <scope>NUCLEOTIDE SEQUENCE [MRNA]</scope>
    <source>
        <tissue>Liver</tissue>
    </source>
</reference>
<reference key="2">
    <citation type="journal article" date="2004" name="Genome Res.">
        <title>The status, quality, and expansion of the NIH full-length cDNA project: the Mammalian Gene Collection (MGC).</title>
        <authorList>
            <consortium name="The MGC Project Team"/>
        </authorList>
    </citation>
    <scope>NUCLEOTIDE SEQUENCE [LARGE SCALE MRNA]</scope>
    <source>
        <tissue>Spleen</tissue>
    </source>
</reference>
<reference key="3">
    <citation type="journal article" date="1986" name="J. Biol. Chem.">
        <title>Developmental and tissue-specific expression of alpha 1-microglobulin mRNA in the rat.</title>
        <authorList>
            <person name="Kastern W."/>
            <person name="Bjoerck L."/>
            <person name="Aakerstroem B."/>
        </authorList>
    </citation>
    <scope>NUCLEOTIDE SEQUENCE [MRNA] OF 141-195</scope>
</reference>
<reference key="4">
    <citation type="journal article" date="1988" name="J. Biol. Chem.">
        <title>Kunitz-type protease inhibitor found in rat mast cells. Purification, properties, and amino acid sequence.</title>
        <authorList>
            <person name="Kido H."/>
            <person name="Yokogoshi Y."/>
            <person name="Katunuma N."/>
        </authorList>
    </citation>
    <scope>PROTEIN SEQUENCE OF 283-343</scope>
    <scope>FUNCTION</scope>
    <scope>SUBUNIT</scope>
    <source>
        <strain>Wistar</strain>
    </source>
</reference>
<reference key="5">
    <citation type="journal article" date="1994" name="Biochem. J.">
        <title>Isolation and characterization of fibronectin-alpha 1-microglobulin complex in rat plasma.</title>
        <authorList>
            <person name="Falkenberg C."/>
            <person name="Enghild J.J."/>
            <person name="Thoegersen I.B."/>
            <person name="Salvesen G."/>
            <person name="Aakerstroem B."/>
        </authorList>
    </citation>
    <scope>INTERACTION WITH FN1</scope>
</reference>
<reference key="6">
    <citation type="journal article" date="1994" name="J. Biol. Chem.">
        <title>Mast cell protease inhibitor, trypstatin, is a fragment of inter-alpha-trypsin inhibitor light chain.</title>
        <authorList>
            <person name="Itoh H."/>
            <person name="Ide H."/>
            <person name="Ishikawa N."/>
            <person name="Nawa Y."/>
        </authorList>
    </citation>
    <scope>PROTEOLYTIC PROCESSING</scope>
</reference>
<accession>Q64240</accession>
<accession>P19603</accession>
<accession>Q63336</accession>
<proteinExistence type="evidence at protein level"/>
<evidence type="ECO:0000250" key="1"/>
<evidence type="ECO:0000250" key="2">
    <source>
        <dbReference type="UniProtKB" id="P02760"/>
    </source>
</evidence>
<evidence type="ECO:0000250" key="3">
    <source>
        <dbReference type="UniProtKB" id="Q07456"/>
    </source>
</evidence>
<evidence type="ECO:0000255" key="4"/>
<evidence type="ECO:0000255" key="5">
    <source>
        <dbReference type="PROSITE-ProRule" id="PRU00031"/>
    </source>
</evidence>
<evidence type="ECO:0000269" key="6">
    <source>
    </source>
</evidence>
<evidence type="ECO:0000269" key="7">
    <source>
    </source>
</evidence>
<evidence type="ECO:0000303" key="8">
    <source>
    </source>
</evidence>
<evidence type="ECO:0000305" key="9"/>
<gene>
    <name type="primary">Ambp</name>
    <name type="synonym">Itil</name>
</gene>
<organism>
    <name type="scientific">Rattus norvegicus</name>
    <name type="common">Rat</name>
    <dbReference type="NCBI Taxonomy" id="10116"/>
    <lineage>
        <taxon>Eukaryota</taxon>
        <taxon>Metazoa</taxon>
        <taxon>Chordata</taxon>
        <taxon>Craniata</taxon>
        <taxon>Vertebrata</taxon>
        <taxon>Euteleostomi</taxon>
        <taxon>Mammalia</taxon>
        <taxon>Eutheria</taxon>
        <taxon>Euarchontoglires</taxon>
        <taxon>Glires</taxon>
        <taxon>Rodentia</taxon>
        <taxon>Myomorpha</taxon>
        <taxon>Muroidea</taxon>
        <taxon>Muridae</taxon>
        <taxon>Murinae</taxon>
        <taxon>Rattus</taxon>
    </lineage>
</organism>
<name>AMBP_RAT</name>
<dbReference type="EC" id="1.6.2.-" evidence="2"/>
<dbReference type="EMBL" id="S87544">
    <property type="protein sequence ID" value="AAB21782.1"/>
    <property type="molecule type" value="mRNA"/>
</dbReference>
<dbReference type="EMBL" id="BC088166">
    <property type="protein sequence ID" value="AAH88166.1"/>
    <property type="molecule type" value="mRNA"/>
</dbReference>
<dbReference type="EMBL" id="J02600">
    <property type="protein sequence ID" value="AAA41596.1"/>
    <property type="molecule type" value="mRNA"/>
</dbReference>
<dbReference type="PIR" id="S21089">
    <property type="entry name" value="S21089"/>
</dbReference>
<dbReference type="RefSeq" id="NP_037033.1">
    <property type="nucleotide sequence ID" value="NM_012901.3"/>
</dbReference>
<dbReference type="SMR" id="Q64240"/>
<dbReference type="FunCoup" id="Q64240">
    <property type="interactions" value="86"/>
</dbReference>
<dbReference type="STRING" id="10116.ENSRNOP00000009248"/>
<dbReference type="MEROPS" id="I02.005"/>
<dbReference type="MEROPS" id="I02.006"/>
<dbReference type="GlyCosmos" id="Q64240">
    <property type="glycosylation" value="2 sites, No reported glycans"/>
</dbReference>
<dbReference type="GlyGen" id="Q64240">
    <property type="glycosylation" value="3 sites"/>
</dbReference>
<dbReference type="iPTMnet" id="Q64240"/>
<dbReference type="PhosphoSitePlus" id="Q64240"/>
<dbReference type="SwissPalm" id="Q64240"/>
<dbReference type="PaxDb" id="10116-ENSRNOP00000009248"/>
<dbReference type="GeneID" id="25377"/>
<dbReference type="KEGG" id="rno:25377"/>
<dbReference type="UCSC" id="RGD:2102">
    <property type="organism name" value="rat"/>
</dbReference>
<dbReference type="AGR" id="RGD:2102"/>
<dbReference type="CTD" id="259"/>
<dbReference type="RGD" id="2102">
    <property type="gene designation" value="Ambp"/>
</dbReference>
<dbReference type="VEuPathDB" id="HostDB:ENSRNOG00000006889"/>
<dbReference type="eggNOG" id="KOG4295">
    <property type="taxonomic scope" value="Eukaryota"/>
</dbReference>
<dbReference type="HOGENOM" id="CLU_067584_0_0_1"/>
<dbReference type="InParanoid" id="Q64240"/>
<dbReference type="OrthoDB" id="9949223at2759"/>
<dbReference type="PhylomeDB" id="Q64240"/>
<dbReference type="TreeFam" id="TF351222"/>
<dbReference type="Reactome" id="R-RNO-2168880">
    <property type="pathway name" value="Scavenging of heme from plasma"/>
</dbReference>
<dbReference type="PRO" id="PR:Q64240"/>
<dbReference type="Proteomes" id="UP000002494">
    <property type="component" value="Chromosome 5"/>
</dbReference>
<dbReference type="Bgee" id="ENSRNOG00000006889">
    <property type="expression patterns" value="Expressed in liver and 18 other cell types or tissues"/>
</dbReference>
<dbReference type="GO" id="GO:0009986">
    <property type="term" value="C:cell surface"/>
    <property type="evidence" value="ECO:0000314"/>
    <property type="project" value="RGD"/>
</dbReference>
<dbReference type="GO" id="GO:0005829">
    <property type="term" value="C:cytosol"/>
    <property type="evidence" value="ECO:0007669"/>
    <property type="project" value="UniProtKB-SubCell"/>
</dbReference>
<dbReference type="GO" id="GO:0005783">
    <property type="term" value="C:endoplasmic reticulum"/>
    <property type="evidence" value="ECO:0007669"/>
    <property type="project" value="UniProtKB-SubCell"/>
</dbReference>
<dbReference type="GO" id="GO:0005615">
    <property type="term" value="C:extracellular space"/>
    <property type="evidence" value="ECO:0000314"/>
    <property type="project" value="RGD"/>
</dbReference>
<dbReference type="GO" id="GO:0005743">
    <property type="term" value="C:mitochondrial inner membrane"/>
    <property type="evidence" value="ECO:0007669"/>
    <property type="project" value="UniProtKB-SubCell"/>
</dbReference>
<dbReference type="GO" id="GO:0031965">
    <property type="term" value="C:nuclear membrane"/>
    <property type="evidence" value="ECO:0007669"/>
    <property type="project" value="UniProtKB-SubCell"/>
</dbReference>
<dbReference type="GO" id="GO:0005886">
    <property type="term" value="C:plasma membrane"/>
    <property type="evidence" value="ECO:0000250"/>
    <property type="project" value="UniProtKB"/>
</dbReference>
<dbReference type="GO" id="GO:0030246">
    <property type="term" value="F:carbohydrate binding"/>
    <property type="evidence" value="ECO:0000266"/>
    <property type="project" value="RGD"/>
</dbReference>
<dbReference type="GO" id="GO:0020037">
    <property type="term" value="F:heme binding"/>
    <property type="evidence" value="ECO:0000250"/>
    <property type="project" value="UniProtKB"/>
</dbReference>
<dbReference type="GO" id="GO:0019862">
    <property type="term" value="F:IgA binding"/>
    <property type="evidence" value="ECO:0000250"/>
    <property type="project" value="UniProtKB"/>
</dbReference>
<dbReference type="GO" id="GO:0016491">
    <property type="term" value="F:oxidoreductase activity"/>
    <property type="evidence" value="ECO:0007669"/>
    <property type="project" value="UniProtKB-KW"/>
</dbReference>
<dbReference type="GO" id="GO:0042803">
    <property type="term" value="F:protein homodimerization activity"/>
    <property type="evidence" value="ECO:0000250"/>
    <property type="project" value="UniProtKB"/>
</dbReference>
<dbReference type="GO" id="GO:0004867">
    <property type="term" value="F:serine-type endopeptidase inhibitor activity"/>
    <property type="evidence" value="ECO:0000314"/>
    <property type="project" value="RGD"/>
</dbReference>
<dbReference type="GO" id="GO:0030163">
    <property type="term" value="P:protein catabolic process"/>
    <property type="evidence" value="ECO:0000314"/>
    <property type="project" value="RGD"/>
</dbReference>
<dbReference type="CDD" id="cd22596">
    <property type="entry name" value="Kunitz_bikunin_1-like"/>
    <property type="match status" value="1"/>
</dbReference>
<dbReference type="CDD" id="cd22597">
    <property type="entry name" value="Kunitz_bikunin_2-like"/>
    <property type="match status" value="1"/>
</dbReference>
<dbReference type="CDD" id="cd19418">
    <property type="entry name" value="lipocalin_A1M-like"/>
    <property type="match status" value="1"/>
</dbReference>
<dbReference type="FunFam" id="2.40.128.20:FF:000007">
    <property type="entry name" value="Alpha-1-microglobulin/bikunin precursor"/>
    <property type="match status" value="1"/>
</dbReference>
<dbReference type="FunFam" id="4.10.410.10:FF:000010">
    <property type="entry name" value="Alpha1-microglobulin/bikunin (AMBP)"/>
    <property type="match status" value="1"/>
</dbReference>
<dbReference type="Gene3D" id="2.40.128.20">
    <property type="match status" value="1"/>
</dbReference>
<dbReference type="Gene3D" id="4.10.410.10">
    <property type="entry name" value="Pancreatic trypsin inhibitor Kunitz domain"/>
    <property type="match status" value="2"/>
</dbReference>
<dbReference type="InterPro" id="IPR002968">
    <property type="entry name" value="A1-microglobln"/>
</dbReference>
<dbReference type="InterPro" id="IPR029856">
    <property type="entry name" value="AMBP"/>
</dbReference>
<dbReference type="InterPro" id="IPR012674">
    <property type="entry name" value="Calycin"/>
</dbReference>
<dbReference type="InterPro" id="IPR002223">
    <property type="entry name" value="Kunitz_BPTI"/>
</dbReference>
<dbReference type="InterPro" id="IPR036880">
    <property type="entry name" value="Kunitz_BPTI_sf"/>
</dbReference>
<dbReference type="InterPro" id="IPR022272">
    <property type="entry name" value="Lipocalin_CS"/>
</dbReference>
<dbReference type="InterPro" id="IPR000566">
    <property type="entry name" value="Lipocln_cytosolic_FA-bd_dom"/>
</dbReference>
<dbReference type="InterPro" id="IPR020901">
    <property type="entry name" value="Prtase_inh_Kunz-CS"/>
</dbReference>
<dbReference type="PANTHER" id="PTHR46676">
    <property type="entry name" value="PROTEIN AMBP"/>
    <property type="match status" value="1"/>
</dbReference>
<dbReference type="PANTHER" id="PTHR46676:SF1">
    <property type="entry name" value="PROTEIN AMBP"/>
    <property type="match status" value="1"/>
</dbReference>
<dbReference type="Pfam" id="PF00014">
    <property type="entry name" value="Kunitz_BPTI"/>
    <property type="match status" value="2"/>
</dbReference>
<dbReference type="Pfam" id="PF00061">
    <property type="entry name" value="Lipocalin"/>
    <property type="match status" value="1"/>
</dbReference>
<dbReference type="PRINTS" id="PR01215">
    <property type="entry name" value="A1MCGLOBULIN"/>
</dbReference>
<dbReference type="PRINTS" id="PR00759">
    <property type="entry name" value="BASICPTASE"/>
</dbReference>
<dbReference type="PRINTS" id="PR00179">
    <property type="entry name" value="LIPOCALIN"/>
</dbReference>
<dbReference type="SMART" id="SM00131">
    <property type="entry name" value="KU"/>
    <property type="match status" value="2"/>
</dbReference>
<dbReference type="SUPFAM" id="SSF57362">
    <property type="entry name" value="BPTI-like"/>
    <property type="match status" value="2"/>
</dbReference>
<dbReference type="SUPFAM" id="SSF50814">
    <property type="entry name" value="Lipocalins"/>
    <property type="match status" value="1"/>
</dbReference>
<dbReference type="PROSITE" id="PS00280">
    <property type="entry name" value="BPTI_KUNITZ_1"/>
    <property type="match status" value="2"/>
</dbReference>
<dbReference type="PROSITE" id="PS50279">
    <property type="entry name" value="BPTI_KUNITZ_2"/>
    <property type="match status" value="2"/>
</dbReference>
<dbReference type="PROSITE" id="PS00213">
    <property type="entry name" value="LIPOCALIN"/>
    <property type="match status" value="1"/>
</dbReference>
<protein>
    <recommendedName>
        <fullName>Protein AMBP</fullName>
    </recommendedName>
    <component>
        <recommendedName>
            <fullName>Alpha-1-microglobulin</fullName>
            <ecNumber evidence="2">1.6.2.-</ecNumber>
        </recommendedName>
    </component>
    <component>
        <recommendedName>
            <fullName>Inter-alpha-trypsin inhibitor light chain</fullName>
            <shortName>ITI-LC</shortName>
        </recommendedName>
        <alternativeName>
            <fullName>Bikunin</fullName>
        </alternativeName>
        <alternativeName>
            <fullName>HI-30</fullName>
        </alternativeName>
    </component>
    <component>
        <recommendedName>
            <fullName evidence="8">Trypstatin</fullName>
        </recommendedName>
    </component>
</protein>
<keyword id="KW-1003">Cell membrane</keyword>
<keyword id="KW-0157">Chromophore</keyword>
<keyword id="KW-0165">Cleavage on pair of basic residues</keyword>
<keyword id="KW-0963">Cytoplasm</keyword>
<keyword id="KW-0903">Direct protein sequencing</keyword>
<keyword id="KW-1015">Disulfide bond</keyword>
<keyword id="KW-0256">Endoplasmic reticulum</keyword>
<keyword id="KW-0272">Extracellular matrix</keyword>
<keyword id="KW-0325">Glycoprotein</keyword>
<keyword id="KW-0472">Membrane</keyword>
<keyword id="KW-0496">Mitochondrion</keyword>
<keyword id="KW-0999">Mitochondrion inner membrane</keyword>
<keyword id="KW-0539">Nucleus</keyword>
<keyword id="KW-0560">Oxidoreductase</keyword>
<keyword id="KW-0646">Protease inhibitor</keyword>
<keyword id="KW-0654">Proteoglycan</keyword>
<keyword id="KW-1185">Reference proteome</keyword>
<keyword id="KW-0677">Repeat</keyword>
<keyword id="KW-0964">Secreted</keyword>
<keyword id="KW-0722">Serine protease inhibitor</keyword>
<keyword id="KW-0732">Signal</keyword>
<sequence length="349" mass="38851">MQGLGALFLLLTACLTLKADNVPTLPDIQVQENFNEARIYGKWFNLAVGSTCPWLRRIKNKMSVSTLVLQEGATEAEISVTSTQWRKGVCEEISGVYQKTDIDGKFLYHKSKWNATLESYVVHTNYDEYAIFLTKKFSHRHGPTITAKLYGREPQLRDSLLQEFREVALSVGIPENSIVFMADRGECVPGDREVESTSFARARRAVLPQENEGSGSEPLITGTLKKEDSCQLNYSEGPCLGMQQKYYYNGASMACETFQYGGCLGNGNNFASEKECLQTCRTIAACNLPIVQGPCRAFAELWAFDAAQGKCIQFIYGGCKGNGNKFYSEKECKEYCGVPGDGYEELTRS</sequence>